<name>TRMB_STAS1</name>
<gene>
    <name evidence="2" type="primary">trmB</name>
    <name type="ordered locus">SSP1015</name>
</gene>
<dbReference type="EC" id="2.1.1.33" evidence="2"/>
<dbReference type="EMBL" id="AP008934">
    <property type="protein sequence ID" value="BAE18160.1"/>
    <property type="molecule type" value="Genomic_DNA"/>
</dbReference>
<dbReference type="RefSeq" id="WP_011302865.1">
    <property type="nucleotide sequence ID" value="NZ_MTGA01000033.1"/>
</dbReference>
<dbReference type="SMR" id="Q49YH9"/>
<dbReference type="GeneID" id="3615709"/>
<dbReference type="KEGG" id="ssp:SSP1015"/>
<dbReference type="PATRIC" id="fig|342451.11.peg.1014"/>
<dbReference type="eggNOG" id="COG0220">
    <property type="taxonomic scope" value="Bacteria"/>
</dbReference>
<dbReference type="HOGENOM" id="CLU_050910_2_1_9"/>
<dbReference type="OrthoDB" id="9802090at2"/>
<dbReference type="UniPathway" id="UPA00989"/>
<dbReference type="Proteomes" id="UP000006371">
    <property type="component" value="Chromosome"/>
</dbReference>
<dbReference type="GO" id="GO:0043527">
    <property type="term" value="C:tRNA methyltransferase complex"/>
    <property type="evidence" value="ECO:0007669"/>
    <property type="project" value="TreeGrafter"/>
</dbReference>
<dbReference type="GO" id="GO:0008176">
    <property type="term" value="F:tRNA (guanine(46)-N7)-methyltransferase activity"/>
    <property type="evidence" value="ECO:0007669"/>
    <property type="project" value="UniProtKB-UniRule"/>
</dbReference>
<dbReference type="FunFam" id="3.40.50.150:FF:000035">
    <property type="entry name" value="tRNA (guanine-N(7)-)-methyltransferase"/>
    <property type="match status" value="1"/>
</dbReference>
<dbReference type="Gene3D" id="3.40.50.150">
    <property type="entry name" value="Vaccinia Virus protein VP39"/>
    <property type="match status" value="1"/>
</dbReference>
<dbReference type="HAMAP" id="MF_01057">
    <property type="entry name" value="tRNA_methyltr_TrmB"/>
    <property type="match status" value="1"/>
</dbReference>
<dbReference type="InterPro" id="IPR029063">
    <property type="entry name" value="SAM-dependent_MTases_sf"/>
</dbReference>
<dbReference type="InterPro" id="IPR003358">
    <property type="entry name" value="tRNA_(Gua-N-7)_MeTrfase_Trmb"/>
</dbReference>
<dbReference type="InterPro" id="IPR055361">
    <property type="entry name" value="tRNA_methyltr_TrmB_bact"/>
</dbReference>
<dbReference type="NCBIfam" id="NF001080">
    <property type="entry name" value="PRK00121.2-2"/>
    <property type="match status" value="1"/>
</dbReference>
<dbReference type="NCBIfam" id="TIGR00091">
    <property type="entry name" value="tRNA (guanosine(46)-N7)-methyltransferase TrmB"/>
    <property type="match status" value="1"/>
</dbReference>
<dbReference type="PANTHER" id="PTHR23417">
    <property type="entry name" value="3-DEOXY-D-MANNO-OCTULOSONIC-ACID TRANSFERASE/TRNA GUANINE-N 7 - -METHYLTRANSFERASE"/>
    <property type="match status" value="1"/>
</dbReference>
<dbReference type="PANTHER" id="PTHR23417:SF14">
    <property type="entry name" value="PENTACOTRIPEPTIDE-REPEAT REGION OF PRORP DOMAIN-CONTAINING PROTEIN"/>
    <property type="match status" value="1"/>
</dbReference>
<dbReference type="Pfam" id="PF02390">
    <property type="entry name" value="Methyltransf_4"/>
    <property type="match status" value="1"/>
</dbReference>
<dbReference type="SUPFAM" id="SSF53335">
    <property type="entry name" value="S-adenosyl-L-methionine-dependent methyltransferases"/>
    <property type="match status" value="1"/>
</dbReference>
<dbReference type="PROSITE" id="PS51625">
    <property type="entry name" value="SAM_MT_TRMB"/>
    <property type="match status" value="1"/>
</dbReference>
<accession>Q49YH9</accession>
<organism>
    <name type="scientific">Staphylococcus saprophyticus subsp. saprophyticus (strain ATCC 15305 / DSM 20229 / NCIMB 8711 / NCTC 7292 / S-41)</name>
    <dbReference type="NCBI Taxonomy" id="342451"/>
    <lineage>
        <taxon>Bacteria</taxon>
        <taxon>Bacillati</taxon>
        <taxon>Bacillota</taxon>
        <taxon>Bacilli</taxon>
        <taxon>Bacillales</taxon>
        <taxon>Staphylococcaceae</taxon>
        <taxon>Staphylococcus</taxon>
    </lineage>
</organism>
<keyword id="KW-0489">Methyltransferase</keyword>
<keyword id="KW-1185">Reference proteome</keyword>
<keyword id="KW-0949">S-adenosyl-L-methionine</keyword>
<keyword id="KW-0808">Transferase</keyword>
<keyword id="KW-0819">tRNA processing</keyword>
<feature type="chain" id="PRO_0000171397" description="tRNA (guanine-N(7)-)-methyltransferase">
    <location>
        <begin position="1"/>
        <end position="211"/>
    </location>
</feature>
<feature type="active site" evidence="1">
    <location>
        <position position="117"/>
    </location>
</feature>
<feature type="binding site" evidence="2">
    <location>
        <position position="43"/>
    </location>
    <ligand>
        <name>S-adenosyl-L-methionine</name>
        <dbReference type="ChEBI" id="CHEBI:59789"/>
    </ligand>
</feature>
<feature type="binding site" evidence="2">
    <location>
        <position position="68"/>
    </location>
    <ligand>
        <name>S-adenosyl-L-methionine</name>
        <dbReference type="ChEBI" id="CHEBI:59789"/>
    </ligand>
</feature>
<feature type="binding site" evidence="2">
    <location>
        <position position="95"/>
    </location>
    <ligand>
        <name>S-adenosyl-L-methionine</name>
        <dbReference type="ChEBI" id="CHEBI:59789"/>
    </ligand>
</feature>
<feature type="binding site" evidence="2">
    <location>
        <position position="117"/>
    </location>
    <ligand>
        <name>S-adenosyl-L-methionine</name>
        <dbReference type="ChEBI" id="CHEBI:59789"/>
    </ligand>
</feature>
<feature type="binding site" evidence="2">
    <location>
        <position position="121"/>
    </location>
    <ligand>
        <name>substrate</name>
    </ligand>
</feature>
<feature type="binding site" evidence="2">
    <location>
        <position position="153"/>
    </location>
    <ligand>
        <name>substrate</name>
    </ligand>
</feature>
<feature type="binding site" evidence="2">
    <location>
        <begin position="190"/>
        <end position="193"/>
    </location>
    <ligand>
        <name>substrate</name>
    </ligand>
</feature>
<proteinExistence type="inferred from homology"/>
<sequence length="211" mass="25073">MRMRYKPWAEDYLKKEPNIVDIDGSHAGRISEWFDNDQPIYIEVGSGRGQFITTLAAKHPEINFISMEREKSVMIKVLDKVIEQGLTNIKLICNDAIELNDYFKDGEVSRLYLNFSDPWPKKRHTKRRLTYQTYLALYKQVLKDDGEIHFKTDNRGLFAYSLESMSQFGMYFTKINLNLHEEDDEENIETEYERKFSDKGSRIYRMEAKFH</sequence>
<comment type="function">
    <text evidence="2">Catalyzes the formation of N(7)-methylguanine at position 46 (m7G46) in tRNA.</text>
</comment>
<comment type="catalytic activity">
    <reaction evidence="2">
        <text>guanosine(46) in tRNA + S-adenosyl-L-methionine = N(7)-methylguanosine(46) in tRNA + S-adenosyl-L-homocysteine</text>
        <dbReference type="Rhea" id="RHEA:42708"/>
        <dbReference type="Rhea" id="RHEA-COMP:10188"/>
        <dbReference type="Rhea" id="RHEA-COMP:10189"/>
        <dbReference type="ChEBI" id="CHEBI:57856"/>
        <dbReference type="ChEBI" id="CHEBI:59789"/>
        <dbReference type="ChEBI" id="CHEBI:74269"/>
        <dbReference type="ChEBI" id="CHEBI:74480"/>
        <dbReference type="EC" id="2.1.1.33"/>
    </reaction>
</comment>
<comment type="pathway">
    <text evidence="2">tRNA modification; N(7)-methylguanine-tRNA biosynthesis.</text>
</comment>
<comment type="similarity">
    <text evidence="2">Belongs to the class I-like SAM-binding methyltransferase superfamily. TrmB family.</text>
</comment>
<reference key="1">
    <citation type="journal article" date="2005" name="Proc. Natl. Acad. Sci. U.S.A.">
        <title>Whole genome sequence of Staphylococcus saprophyticus reveals the pathogenesis of uncomplicated urinary tract infection.</title>
        <authorList>
            <person name="Kuroda M."/>
            <person name="Yamashita A."/>
            <person name="Hirakawa H."/>
            <person name="Kumano M."/>
            <person name="Morikawa K."/>
            <person name="Higashide M."/>
            <person name="Maruyama A."/>
            <person name="Inose Y."/>
            <person name="Matoba K."/>
            <person name="Toh H."/>
            <person name="Kuhara S."/>
            <person name="Hattori M."/>
            <person name="Ohta T."/>
        </authorList>
    </citation>
    <scope>NUCLEOTIDE SEQUENCE [LARGE SCALE GENOMIC DNA]</scope>
    <source>
        <strain>ATCC 15305 / DSM 20229 / NCIMB 8711 / NCTC 7292 / S-41</strain>
    </source>
</reference>
<evidence type="ECO:0000250" key="1"/>
<evidence type="ECO:0000255" key="2">
    <source>
        <dbReference type="HAMAP-Rule" id="MF_01057"/>
    </source>
</evidence>
<protein>
    <recommendedName>
        <fullName evidence="2">tRNA (guanine-N(7)-)-methyltransferase</fullName>
        <ecNumber evidence="2">2.1.1.33</ecNumber>
    </recommendedName>
    <alternativeName>
        <fullName evidence="2">tRNA (guanine(46)-N(7))-methyltransferase</fullName>
    </alternativeName>
    <alternativeName>
        <fullName evidence="2">tRNA(m7G46)-methyltransferase</fullName>
    </alternativeName>
</protein>